<feature type="chain" id="PRO_0000359869" description="Protein pelota homolog">
    <location>
        <begin position="1"/>
        <end position="339"/>
    </location>
</feature>
<feature type="mutagenesis site" description="Strongly reduced ribonuclease activity." evidence="1">
    <original>E</original>
    <variation>A</variation>
    <location>
        <position position="18"/>
    </location>
</feature>
<feature type="mutagenesis site" description="No effect. Strongly reduced ribonuclease activity; when associated with A-22." evidence="1">
    <original>D</original>
    <variation>A</variation>
    <location>
        <position position="21"/>
    </location>
</feature>
<feature type="mutagenesis site" description="No effect. Strongly reduced ribonuclease activity; when associated with A-21." evidence="1">
    <original>D</original>
    <variation>A</variation>
    <location>
        <position position="22"/>
    </location>
</feature>
<feature type="mutagenesis site" description="Slightly reduced ribonuclease activity." evidence="1">
    <original>E</original>
    <variation>A</variation>
    <location>
        <position position="231"/>
    </location>
</feature>
<feature type="strand" evidence="3">
    <location>
        <begin position="2"/>
        <end position="7"/>
    </location>
</feature>
<feature type="turn" evidence="3">
    <location>
        <begin position="8"/>
        <end position="11"/>
    </location>
</feature>
<feature type="strand" evidence="3">
    <location>
        <begin position="12"/>
        <end position="16"/>
    </location>
</feature>
<feature type="helix" evidence="3">
    <location>
        <begin position="21"/>
        <end position="29"/>
    </location>
</feature>
<feature type="strand" evidence="3">
    <location>
        <begin position="35"/>
        <end position="40"/>
    </location>
</feature>
<feature type="strand" evidence="3">
    <location>
        <begin position="57"/>
        <end position="67"/>
    </location>
</feature>
<feature type="strand" evidence="3">
    <location>
        <begin position="75"/>
        <end position="81"/>
    </location>
</feature>
<feature type="strand" evidence="3">
    <location>
        <begin position="95"/>
        <end position="101"/>
    </location>
</feature>
<feature type="strand" evidence="3">
    <location>
        <begin position="106"/>
        <end position="111"/>
    </location>
</feature>
<feature type="helix" evidence="3">
    <location>
        <begin position="115"/>
        <end position="124"/>
    </location>
</feature>
<feature type="helix" evidence="3">
    <location>
        <begin position="127"/>
        <end position="130"/>
    </location>
</feature>
<feature type="strand" evidence="3">
    <location>
        <begin position="133"/>
        <end position="138"/>
    </location>
</feature>
<feature type="strand" evidence="3">
    <location>
        <begin position="140"/>
        <end position="148"/>
    </location>
</feature>
<feature type="strand" evidence="3">
    <location>
        <begin position="153"/>
        <end position="160"/>
    </location>
</feature>
<feature type="helix" evidence="3">
    <location>
        <begin position="163"/>
        <end position="166"/>
    </location>
</feature>
<feature type="helix" evidence="3">
    <location>
        <begin position="174"/>
        <end position="186"/>
    </location>
</feature>
<feature type="strand" evidence="3">
    <location>
        <begin position="192"/>
        <end position="199"/>
    </location>
</feature>
<feature type="helix" evidence="3">
    <location>
        <begin position="200"/>
        <end position="210"/>
    </location>
</feature>
<feature type="strand" evidence="3">
    <location>
        <begin position="222"/>
        <end position="225"/>
    </location>
</feature>
<feature type="helix" evidence="3">
    <location>
        <begin position="226"/>
        <end position="234"/>
    </location>
</feature>
<feature type="helix" evidence="3">
    <location>
        <begin position="236"/>
        <end position="242"/>
    </location>
</feature>
<feature type="helix" evidence="3">
    <location>
        <begin position="246"/>
        <end position="262"/>
    </location>
</feature>
<feature type="strand" evidence="3">
    <location>
        <begin position="266"/>
        <end position="269"/>
    </location>
</feature>
<feature type="helix" evidence="3">
    <location>
        <begin position="270"/>
        <end position="278"/>
    </location>
</feature>
<feature type="strand" evidence="3">
    <location>
        <begin position="282"/>
        <end position="288"/>
    </location>
</feature>
<feature type="helix" evidence="3">
    <location>
        <begin position="289"/>
        <end position="292"/>
    </location>
</feature>
<feature type="helix" evidence="3">
    <location>
        <begin position="295"/>
        <end position="307"/>
    </location>
</feature>
<feature type="strand" evidence="3">
    <location>
        <begin position="310"/>
        <end position="314"/>
    </location>
</feature>
<feature type="helix" evidence="3">
    <location>
        <begin position="319"/>
        <end position="326"/>
    </location>
</feature>
<feature type="strand" evidence="3">
    <location>
        <begin position="329"/>
        <end position="334"/>
    </location>
</feature>
<gene>
    <name type="primary">pelA</name>
    <name type="ordered locus">Ta1098</name>
</gene>
<protein>
    <recommendedName>
        <fullName>Protein pelota homolog</fullName>
        <ecNumber>3.1.-.-</ecNumber>
    </recommendedName>
    <alternativeName>
        <fullName>Cell division protein pelota-related protein</fullName>
    </alternativeName>
</protein>
<name>PELO_THEAC</name>
<sequence>MRILEEDLKNSTYRIRIESLDDLWYLRNILSEGDEVSAITFRRVEESADVQRSRERERIPITIRLKVEKIEFQDFDNRLRILGTVIEGPEDTKGKHQSITVTVDSEISITKEWDDQHIDLLKEATDEKYVTVYTAVAMDEDEAQIFLIHPYGIQQVGTVYSGRSGKYAEGNYSEASYFDQIVNALKNYSNSIIILGPGFARDRFARYCAQRGVNVIGSFPANRTDSGAVYEFITSADGAKLLSNERIARDKEIVDEFLVAVKKDMGVYGRDQTESALQMGALSDLIITDEMFRTEDGRRSLSIAQTVGTRIHIVSVSNDPGQIVKKFGGFAGILRYRVQ</sequence>
<organism>
    <name type="scientific">Thermoplasma acidophilum (strain ATCC 25905 / DSM 1728 / JCM 9062 / NBRC 15155 / AMRC-C165)</name>
    <dbReference type="NCBI Taxonomy" id="273075"/>
    <lineage>
        <taxon>Archaea</taxon>
        <taxon>Methanobacteriati</taxon>
        <taxon>Thermoplasmatota</taxon>
        <taxon>Thermoplasmata</taxon>
        <taxon>Thermoplasmatales</taxon>
        <taxon>Thermoplasmataceae</taxon>
        <taxon>Thermoplasma</taxon>
    </lineage>
</organism>
<reference key="1">
    <citation type="journal article" date="2000" name="Nature">
        <title>The genome sequence of the thermoacidophilic scavenger Thermoplasma acidophilum.</title>
        <authorList>
            <person name="Ruepp A."/>
            <person name="Graml W."/>
            <person name="Santos-Martinez M.-L."/>
            <person name="Koretke K.K."/>
            <person name="Volker C."/>
            <person name="Mewes H.-W."/>
            <person name="Frishman D."/>
            <person name="Stocker S."/>
            <person name="Lupas A.N."/>
            <person name="Baumeister W."/>
        </authorList>
    </citation>
    <scope>NUCLEOTIDE SEQUENCE [LARGE SCALE GENOMIC DNA]</scope>
    <source>
        <strain>ATCC 25905 / DSM 1728 / JCM 9062 / NBRC 15155 / AMRC-C165</strain>
    </source>
</reference>
<reference key="2">
    <citation type="journal article" date="2007" name="Mol. Cell">
        <title>Structural and functional insights into Dom34, a key component of no-go mRNA decay.</title>
        <authorList>
            <person name="Lee H.H."/>
            <person name="Kim Y.-S."/>
            <person name="Kim K.H."/>
            <person name="Heo I."/>
            <person name="Kim S.K."/>
            <person name="Kim O."/>
            <person name="Kim H.K."/>
            <person name="Yoon J.Y."/>
            <person name="Kim H.S."/>
            <person name="Kim do J."/>
            <person name="Lee S.J."/>
            <person name="Yoon H.J."/>
            <person name="Kim S.J."/>
            <person name="Lee B.G."/>
            <person name="Song H.K."/>
            <person name="Kim V.N."/>
            <person name="Park C.-M."/>
            <person name="Suh S.W."/>
        </authorList>
    </citation>
    <scope>X-RAY CRYSTALLOGRAPHY (2.9 ANGSTROMS)</scope>
    <scope>COFACTOR</scope>
    <scope>SUBUNIT</scope>
    <scope>DOMAIN</scope>
    <scope>FUNCTION</scope>
    <scope>MUTAGENESIS OF GLU-18; ASP-21; ASP-22 AND GLU-231</scope>
</reference>
<proteinExistence type="evidence at protein level"/>
<dbReference type="EC" id="3.1.-.-"/>
<dbReference type="EMBL" id="AL445066">
    <property type="protein sequence ID" value="CAC12225.1"/>
    <property type="molecule type" value="Genomic_DNA"/>
</dbReference>
<dbReference type="RefSeq" id="WP_010901508.1">
    <property type="nucleotide sequence ID" value="NC_002578.1"/>
</dbReference>
<dbReference type="PDB" id="2QI2">
    <property type="method" value="X-ray"/>
    <property type="resolution" value="2.90 A"/>
    <property type="chains" value="A=1-339"/>
</dbReference>
<dbReference type="PDBsum" id="2QI2"/>
<dbReference type="SMR" id="Q9HJ74"/>
<dbReference type="FunCoup" id="Q9HJ74">
    <property type="interactions" value="104"/>
</dbReference>
<dbReference type="STRING" id="273075.gene:9572319"/>
<dbReference type="PaxDb" id="273075-Ta1098"/>
<dbReference type="EnsemblBacteria" id="CAC12225">
    <property type="protein sequence ID" value="CAC12225"/>
    <property type="gene ID" value="CAC12225"/>
</dbReference>
<dbReference type="KEGG" id="tac:Ta1098"/>
<dbReference type="eggNOG" id="arCOG01741">
    <property type="taxonomic scope" value="Archaea"/>
</dbReference>
<dbReference type="HOGENOM" id="CLU_023334_0_0_2"/>
<dbReference type="InParanoid" id="Q9HJ74"/>
<dbReference type="OrthoDB" id="31300at2157"/>
<dbReference type="EvolutionaryTrace" id="Q9HJ74"/>
<dbReference type="Proteomes" id="UP000001024">
    <property type="component" value="Chromosome"/>
</dbReference>
<dbReference type="GO" id="GO:0005737">
    <property type="term" value="C:cytoplasm"/>
    <property type="evidence" value="ECO:0007669"/>
    <property type="project" value="UniProtKB-SubCell"/>
</dbReference>
<dbReference type="GO" id="GO:0004519">
    <property type="term" value="F:endonuclease activity"/>
    <property type="evidence" value="ECO:0007669"/>
    <property type="project" value="UniProtKB-UniRule"/>
</dbReference>
<dbReference type="GO" id="GO:0046872">
    <property type="term" value="F:metal ion binding"/>
    <property type="evidence" value="ECO:0007669"/>
    <property type="project" value="UniProtKB-UniRule"/>
</dbReference>
<dbReference type="GO" id="GO:0070651">
    <property type="term" value="P:nonfunctional rRNA decay"/>
    <property type="evidence" value="ECO:0007669"/>
    <property type="project" value="TreeGrafter"/>
</dbReference>
<dbReference type="GO" id="GO:0070966">
    <property type="term" value="P:nuclear-transcribed mRNA catabolic process, no-go decay"/>
    <property type="evidence" value="ECO:0007669"/>
    <property type="project" value="InterPro"/>
</dbReference>
<dbReference type="GO" id="GO:0070481">
    <property type="term" value="P:nuclear-transcribed mRNA catabolic process, non-stop decay"/>
    <property type="evidence" value="ECO:0007669"/>
    <property type="project" value="InterPro"/>
</dbReference>
<dbReference type="GO" id="GO:0032790">
    <property type="term" value="P:ribosome disassembly"/>
    <property type="evidence" value="ECO:0007669"/>
    <property type="project" value="TreeGrafter"/>
</dbReference>
<dbReference type="GO" id="GO:0071025">
    <property type="term" value="P:RNA surveillance"/>
    <property type="evidence" value="ECO:0007669"/>
    <property type="project" value="InterPro"/>
</dbReference>
<dbReference type="Gene3D" id="3.30.1330.30">
    <property type="match status" value="1"/>
</dbReference>
<dbReference type="Gene3D" id="3.30.420.60">
    <property type="entry name" value="eRF1 domain 2"/>
    <property type="match status" value="1"/>
</dbReference>
<dbReference type="Gene3D" id="2.30.30.870">
    <property type="entry name" value="Pelota, domain A"/>
    <property type="match status" value="1"/>
</dbReference>
<dbReference type="HAMAP" id="MF_01853">
    <property type="entry name" value="PelO"/>
    <property type="match status" value="1"/>
</dbReference>
<dbReference type="InterPro" id="IPR042226">
    <property type="entry name" value="eFR1_2_sf"/>
</dbReference>
<dbReference type="InterPro" id="IPR005140">
    <property type="entry name" value="eRF1_1_Pelota"/>
</dbReference>
<dbReference type="InterPro" id="IPR005142">
    <property type="entry name" value="eRF1_3"/>
</dbReference>
<dbReference type="InterPro" id="IPR038069">
    <property type="entry name" value="Pelota/DOM34_N"/>
</dbReference>
<dbReference type="InterPro" id="IPR023521">
    <property type="entry name" value="Pelota_arc"/>
</dbReference>
<dbReference type="InterPro" id="IPR029064">
    <property type="entry name" value="Ribosomal_eL30-like_sf"/>
</dbReference>
<dbReference type="InterPro" id="IPR004405">
    <property type="entry name" value="Transl-rel_pelota"/>
</dbReference>
<dbReference type="NCBIfam" id="TIGR00111">
    <property type="entry name" value="pelota"/>
    <property type="match status" value="1"/>
</dbReference>
<dbReference type="PANTHER" id="PTHR10853">
    <property type="entry name" value="PELOTA"/>
    <property type="match status" value="1"/>
</dbReference>
<dbReference type="PANTHER" id="PTHR10853:SF0">
    <property type="entry name" value="PROTEIN PELOTA HOMOLOG"/>
    <property type="match status" value="1"/>
</dbReference>
<dbReference type="Pfam" id="PF03463">
    <property type="entry name" value="eRF1_1"/>
    <property type="match status" value="1"/>
</dbReference>
<dbReference type="Pfam" id="PF03465">
    <property type="entry name" value="eRF1_3"/>
    <property type="match status" value="1"/>
</dbReference>
<dbReference type="SMART" id="SM01194">
    <property type="entry name" value="eRF1_1"/>
    <property type="match status" value="1"/>
</dbReference>
<dbReference type="SUPFAM" id="SSF159065">
    <property type="entry name" value="Dom34/Pelota N-terminal domain-like"/>
    <property type="match status" value="1"/>
</dbReference>
<dbReference type="SUPFAM" id="SSF55315">
    <property type="entry name" value="L30e-like"/>
    <property type="match status" value="1"/>
</dbReference>
<dbReference type="SUPFAM" id="SSF53137">
    <property type="entry name" value="Translational machinery components"/>
    <property type="match status" value="1"/>
</dbReference>
<keyword id="KW-0002">3D-structure</keyword>
<keyword id="KW-0963">Cytoplasm</keyword>
<keyword id="KW-0255">Endonuclease</keyword>
<keyword id="KW-0378">Hydrolase</keyword>
<keyword id="KW-0479">Metal-binding</keyword>
<keyword id="KW-0540">Nuclease</keyword>
<keyword id="KW-1185">Reference proteome</keyword>
<evidence type="ECO:0000269" key="1">
    <source>
    </source>
</evidence>
<evidence type="ECO:0000305" key="2"/>
<evidence type="ECO:0007829" key="3">
    <source>
        <dbReference type="PDB" id="2QI2"/>
    </source>
</evidence>
<accession>Q9HJ74</accession>
<comment type="function">
    <text evidence="1">May function in recognizing stalled ribosomes, interact with stem-loop structures in stalled mRNA molecules, and effect endonucleolytic cleavage of the mRNA. May play a role in the release non-functional ribosomes and degradation of damaged mRNAs. Has endoribonuclease activity.</text>
</comment>
<comment type="cofactor">
    <cofactor evidence="1">
        <name>a divalent metal cation</name>
        <dbReference type="ChEBI" id="CHEBI:60240"/>
    </cofactor>
</comment>
<comment type="subunit">
    <text evidence="1">Monomer.</text>
</comment>
<comment type="subcellular location">
    <subcellularLocation>
        <location evidence="2">Cytoplasm</location>
    </subcellularLocation>
</comment>
<comment type="domain">
    <text evidence="1">The N-terminal domain has the RNA-binding Sm fold. It harbors the endoribonuclease activity.</text>
</comment>
<comment type="similarity">
    <text evidence="2">Belongs to the eukaryotic release factor 1 family. Pelota subfamily.</text>
</comment>